<sequence length="164" mass="17537">TVATILTILASTCMARNVLVNNEGLYAGQSLVVEQYTFIMQDDCNLVLYEYSTPIWASNTGVTGKNGCRAVMQADGNFVVYDVKGRAVWASNSRRGNGNYILVLQKDRNVVIYGSDIWSTGTYRKKVGGTVVMAMNGTVDGGSVVGPVTVNQNVTAVRKVAAAA</sequence>
<organism>
    <name type="scientific">Allium cepa</name>
    <name type="common">Onion</name>
    <dbReference type="NCBI Taxonomy" id="4679"/>
    <lineage>
        <taxon>Eukaryota</taxon>
        <taxon>Viridiplantae</taxon>
        <taxon>Streptophyta</taxon>
        <taxon>Embryophyta</taxon>
        <taxon>Tracheophyta</taxon>
        <taxon>Spermatophyta</taxon>
        <taxon>Magnoliopsida</taxon>
        <taxon>Liliopsida</taxon>
        <taxon>Asparagales</taxon>
        <taxon>Amaryllidaceae</taxon>
        <taxon>Allioideae</taxon>
        <taxon>Allieae</taxon>
        <taxon>Allium</taxon>
    </lineage>
</organism>
<reference key="1">
    <citation type="journal article" date="1993" name="Plant Mol. Biol.">
        <title>Cloning and characterization of the lectin cDNA clones from onion, shallot and leek.</title>
        <authorList>
            <person name="Van Damme E.J."/>
            <person name="Smeets K."/>
            <person name="Engelborghs I."/>
            <person name="Aelbers H."/>
            <person name="Balzarini J."/>
            <person name="Pusztai A."/>
            <person name="van Leuven F."/>
            <person name="Goldstein I.J."/>
            <person name="Peumans W.J."/>
        </authorList>
    </citation>
    <scope>NUCLEOTIDE SEQUENCE [MRNA]</scope>
</reference>
<reference key="2">
    <citation type="journal article" date="2015" name="Int. Immunopharmacol.">
        <title>Characterization of onion lectin (Allium cepa agglutinin) as an immunomodulatory protein inducing Th1-type immune response in vitro.</title>
        <authorList>
            <person name="Prasanna V.K."/>
            <person name="Venkatesh Y.P."/>
        </authorList>
    </citation>
    <scope>PROTEIN SEQUENCE OF N-TERMINUS</scope>
    <scope>FUNCTION</scope>
    <scope>SUBUNIT</scope>
    <scope>LACK OF GLYCOSYLATION</scope>
    <source>
        <tissue>Bulb</tissue>
    </source>
</reference>
<keyword id="KW-0903">Direct protein sequencing</keyword>
<keyword id="KW-1015">Disulfide bond</keyword>
<keyword id="KW-0348">Hemagglutinin</keyword>
<keyword id="KW-0430">Lectin</keyword>
<keyword id="KW-0732">Signal</keyword>
<accession>C0HJM8</accession>
<accession>Q38687</accession>
<feature type="signal peptide" evidence="2">
    <location>
        <begin position="1" status="less than"/>
        <end position="15"/>
    </location>
</feature>
<feature type="chain" id="PRO_0000439160" description="Lectin" evidence="2">
    <location>
        <begin position="16"/>
        <end position="164"/>
    </location>
</feature>
<feature type="domain" description="Bulb-type lectin" evidence="1">
    <location>
        <begin position="16"/>
        <end position="125"/>
    </location>
</feature>
<feature type="disulfide bond" evidence="1">
    <location>
        <begin position="44"/>
        <end position="68"/>
    </location>
</feature>
<feature type="sequence conflict" description="In Ref. 2; AA sequence." evidence="4" ref="2">
    <original>V</original>
    <variation>L</variation>
    <location>
        <position position="20"/>
    </location>
</feature>
<feature type="non-terminal residue" evidence="5">
    <location>
        <position position="1"/>
    </location>
</feature>
<protein>
    <recommendedName>
        <fullName evidence="3">Lectin</fullName>
    </recommendedName>
</protein>
<proteinExistence type="evidence at protein level"/>
<evidence type="ECO:0000255" key="1">
    <source>
        <dbReference type="PROSITE-ProRule" id="PRU00038"/>
    </source>
</evidence>
<evidence type="ECO:0000269" key="2">
    <source>
    </source>
</evidence>
<evidence type="ECO:0000303" key="3">
    <source>
    </source>
</evidence>
<evidence type="ECO:0000305" key="4"/>
<evidence type="ECO:0000312" key="5">
    <source>
        <dbReference type="EMBL" id="AAC37359.1"/>
    </source>
</evidence>
<name>LEC_ALLCE</name>
<comment type="function">
    <text evidence="2">Mannose-specific lectin. Induces a Th1-type immune response in vitro. Causes a 4-fold increase in the proliferation of murine thymocytes and a significant increase in the production of nitric oxide at 24 hours in a macrophage cell line. Stimulates the production of the pro-inflammatory cytokines TNF and IL12 by rat peritoneal macrophages in a dose-dependent manner and of the cytokines IFNG and IL2 in murine thymocytes. Has hemagglutination activity towards rabbit erythrocytes.</text>
</comment>
<comment type="subunit">
    <text evidence="2">Homotetramer.</text>
</comment>
<comment type="PTM">
    <text evidence="2">Not glycosylated.</text>
</comment>
<dbReference type="EMBL" id="L12171">
    <property type="protein sequence ID" value="AAC37359.1"/>
    <property type="molecule type" value="mRNA"/>
</dbReference>
<dbReference type="PIR" id="S39487">
    <property type="entry name" value="S39487"/>
</dbReference>
<dbReference type="SMR" id="C0HJM8"/>
<dbReference type="GO" id="GO:0030246">
    <property type="term" value="F:carbohydrate binding"/>
    <property type="evidence" value="ECO:0007669"/>
    <property type="project" value="UniProtKB-KW"/>
</dbReference>
<dbReference type="GO" id="GO:0051707">
    <property type="term" value="P:response to other organism"/>
    <property type="evidence" value="ECO:0007669"/>
    <property type="project" value="UniProtKB-ARBA"/>
</dbReference>
<dbReference type="CDD" id="cd00028">
    <property type="entry name" value="B_lectin"/>
    <property type="match status" value="1"/>
</dbReference>
<dbReference type="FunFam" id="2.90.10.10:FF:000040">
    <property type="entry name" value="Mannose-binding lectin"/>
    <property type="match status" value="1"/>
</dbReference>
<dbReference type="Gene3D" id="2.90.10.10">
    <property type="entry name" value="Bulb-type lectin domain"/>
    <property type="match status" value="1"/>
</dbReference>
<dbReference type="InterPro" id="IPR001480">
    <property type="entry name" value="Bulb-type_lectin_dom"/>
</dbReference>
<dbReference type="InterPro" id="IPR036426">
    <property type="entry name" value="Bulb-type_lectin_dom_sf"/>
</dbReference>
<dbReference type="SMART" id="SM00108">
    <property type="entry name" value="B_lectin"/>
    <property type="match status" value="1"/>
</dbReference>
<dbReference type="SUPFAM" id="SSF51110">
    <property type="entry name" value="alpha-D-mannose-specific plant lectins"/>
    <property type="match status" value="1"/>
</dbReference>
<dbReference type="PROSITE" id="PS50927">
    <property type="entry name" value="BULB_LECTIN"/>
    <property type="match status" value="1"/>
</dbReference>